<organism>
    <name type="scientific">Streptococcus pyogenes serotype M5 (strain Manfredo)</name>
    <dbReference type="NCBI Taxonomy" id="160491"/>
    <lineage>
        <taxon>Bacteria</taxon>
        <taxon>Bacillati</taxon>
        <taxon>Bacillota</taxon>
        <taxon>Bacilli</taxon>
        <taxon>Lactobacillales</taxon>
        <taxon>Streptococcaceae</taxon>
        <taxon>Streptococcus</taxon>
    </lineage>
</organism>
<gene>
    <name evidence="1" type="primary">metK</name>
    <name type="ordered locus">SpyM50751</name>
</gene>
<keyword id="KW-0067">ATP-binding</keyword>
<keyword id="KW-0963">Cytoplasm</keyword>
<keyword id="KW-0460">Magnesium</keyword>
<keyword id="KW-0479">Metal-binding</keyword>
<keyword id="KW-0547">Nucleotide-binding</keyword>
<keyword id="KW-0554">One-carbon metabolism</keyword>
<keyword id="KW-0630">Potassium</keyword>
<keyword id="KW-0808">Transferase</keyword>
<name>METK_STRPG</name>
<protein>
    <recommendedName>
        <fullName evidence="1">S-adenosylmethionine synthase</fullName>
        <shortName evidence="1">AdoMet synthase</shortName>
        <ecNumber evidence="1">2.5.1.6</ecNumber>
    </recommendedName>
    <alternativeName>
        <fullName evidence="1">MAT</fullName>
    </alternativeName>
    <alternativeName>
        <fullName evidence="1">Methionine adenosyltransferase</fullName>
    </alternativeName>
</protein>
<proteinExistence type="inferred from homology"/>
<dbReference type="EC" id="2.5.1.6" evidence="1"/>
<dbReference type="EMBL" id="AM295007">
    <property type="protein sequence ID" value="CAM30081.1"/>
    <property type="molecule type" value="Genomic_DNA"/>
</dbReference>
<dbReference type="RefSeq" id="WP_002989292.1">
    <property type="nucleotide sequence ID" value="NC_009332.1"/>
</dbReference>
<dbReference type="SMR" id="A2RE06"/>
<dbReference type="GeneID" id="69900671"/>
<dbReference type="KEGG" id="spf:SpyM50751"/>
<dbReference type="HOGENOM" id="CLU_041802_1_1_9"/>
<dbReference type="UniPathway" id="UPA00315">
    <property type="reaction ID" value="UER00080"/>
</dbReference>
<dbReference type="GO" id="GO:0005737">
    <property type="term" value="C:cytoplasm"/>
    <property type="evidence" value="ECO:0007669"/>
    <property type="project" value="UniProtKB-SubCell"/>
</dbReference>
<dbReference type="GO" id="GO:0005524">
    <property type="term" value="F:ATP binding"/>
    <property type="evidence" value="ECO:0007669"/>
    <property type="project" value="UniProtKB-UniRule"/>
</dbReference>
<dbReference type="GO" id="GO:0000287">
    <property type="term" value="F:magnesium ion binding"/>
    <property type="evidence" value="ECO:0007669"/>
    <property type="project" value="UniProtKB-UniRule"/>
</dbReference>
<dbReference type="GO" id="GO:0004478">
    <property type="term" value="F:methionine adenosyltransferase activity"/>
    <property type="evidence" value="ECO:0007669"/>
    <property type="project" value="UniProtKB-UniRule"/>
</dbReference>
<dbReference type="GO" id="GO:0006730">
    <property type="term" value="P:one-carbon metabolic process"/>
    <property type="evidence" value="ECO:0007669"/>
    <property type="project" value="UniProtKB-KW"/>
</dbReference>
<dbReference type="GO" id="GO:0006556">
    <property type="term" value="P:S-adenosylmethionine biosynthetic process"/>
    <property type="evidence" value="ECO:0007669"/>
    <property type="project" value="UniProtKB-UniRule"/>
</dbReference>
<dbReference type="CDD" id="cd18079">
    <property type="entry name" value="S-AdoMet_synt"/>
    <property type="match status" value="1"/>
</dbReference>
<dbReference type="FunFam" id="3.30.300.10:FF:000003">
    <property type="entry name" value="S-adenosylmethionine synthase"/>
    <property type="match status" value="1"/>
</dbReference>
<dbReference type="Gene3D" id="3.30.300.10">
    <property type="match status" value="3"/>
</dbReference>
<dbReference type="HAMAP" id="MF_00086">
    <property type="entry name" value="S_AdoMet_synth1"/>
    <property type="match status" value="1"/>
</dbReference>
<dbReference type="InterPro" id="IPR022631">
    <property type="entry name" value="ADOMET_SYNTHASE_CS"/>
</dbReference>
<dbReference type="InterPro" id="IPR022630">
    <property type="entry name" value="S-AdoMet_synt_C"/>
</dbReference>
<dbReference type="InterPro" id="IPR022629">
    <property type="entry name" value="S-AdoMet_synt_central"/>
</dbReference>
<dbReference type="InterPro" id="IPR022628">
    <property type="entry name" value="S-AdoMet_synt_N"/>
</dbReference>
<dbReference type="InterPro" id="IPR002133">
    <property type="entry name" value="S-AdoMet_synthetase"/>
</dbReference>
<dbReference type="InterPro" id="IPR022636">
    <property type="entry name" value="S-AdoMet_synthetase_sfam"/>
</dbReference>
<dbReference type="NCBIfam" id="TIGR01034">
    <property type="entry name" value="metK"/>
    <property type="match status" value="1"/>
</dbReference>
<dbReference type="PANTHER" id="PTHR11964">
    <property type="entry name" value="S-ADENOSYLMETHIONINE SYNTHETASE"/>
    <property type="match status" value="1"/>
</dbReference>
<dbReference type="Pfam" id="PF02773">
    <property type="entry name" value="S-AdoMet_synt_C"/>
    <property type="match status" value="1"/>
</dbReference>
<dbReference type="Pfam" id="PF02772">
    <property type="entry name" value="S-AdoMet_synt_M"/>
    <property type="match status" value="1"/>
</dbReference>
<dbReference type="Pfam" id="PF00438">
    <property type="entry name" value="S-AdoMet_synt_N"/>
    <property type="match status" value="1"/>
</dbReference>
<dbReference type="PIRSF" id="PIRSF000497">
    <property type="entry name" value="MAT"/>
    <property type="match status" value="1"/>
</dbReference>
<dbReference type="SUPFAM" id="SSF55973">
    <property type="entry name" value="S-adenosylmethionine synthetase"/>
    <property type="match status" value="3"/>
</dbReference>
<dbReference type="PROSITE" id="PS00376">
    <property type="entry name" value="ADOMET_SYNTHASE_1"/>
    <property type="match status" value="1"/>
</dbReference>
<dbReference type="PROSITE" id="PS00377">
    <property type="entry name" value="ADOMET_SYNTHASE_2"/>
    <property type="match status" value="1"/>
</dbReference>
<comment type="function">
    <text evidence="1">Catalyzes the formation of S-adenosylmethionine (AdoMet) from methionine and ATP. The overall synthetic reaction is composed of two sequential steps, AdoMet formation and the subsequent tripolyphosphate hydrolysis which occurs prior to release of AdoMet from the enzyme.</text>
</comment>
<comment type="catalytic activity">
    <reaction evidence="1">
        <text>L-methionine + ATP + H2O = S-adenosyl-L-methionine + phosphate + diphosphate</text>
        <dbReference type="Rhea" id="RHEA:21080"/>
        <dbReference type="ChEBI" id="CHEBI:15377"/>
        <dbReference type="ChEBI" id="CHEBI:30616"/>
        <dbReference type="ChEBI" id="CHEBI:33019"/>
        <dbReference type="ChEBI" id="CHEBI:43474"/>
        <dbReference type="ChEBI" id="CHEBI:57844"/>
        <dbReference type="ChEBI" id="CHEBI:59789"/>
        <dbReference type="EC" id="2.5.1.6"/>
    </reaction>
</comment>
<comment type="cofactor">
    <cofactor evidence="1">
        <name>Mg(2+)</name>
        <dbReference type="ChEBI" id="CHEBI:18420"/>
    </cofactor>
    <text evidence="1">Binds 2 divalent ions per subunit.</text>
</comment>
<comment type="cofactor">
    <cofactor evidence="1">
        <name>K(+)</name>
        <dbReference type="ChEBI" id="CHEBI:29103"/>
    </cofactor>
    <text evidence="1">Binds 1 potassium ion per subunit.</text>
</comment>
<comment type="pathway">
    <text evidence="1">Amino-acid biosynthesis; S-adenosyl-L-methionine biosynthesis; S-adenosyl-L-methionine from L-methionine: step 1/1.</text>
</comment>
<comment type="subunit">
    <text evidence="1">Homotetramer; dimer of dimers.</text>
</comment>
<comment type="subcellular location">
    <subcellularLocation>
        <location evidence="1">Cytoplasm</location>
    </subcellularLocation>
</comment>
<comment type="similarity">
    <text evidence="1">Belongs to the AdoMet synthase family.</text>
</comment>
<evidence type="ECO:0000255" key="1">
    <source>
        <dbReference type="HAMAP-Rule" id="MF_00086"/>
    </source>
</evidence>
<reference key="1">
    <citation type="journal article" date="2007" name="J. Bacteriol.">
        <title>Complete genome of acute rheumatic fever-associated serotype M5 Streptococcus pyogenes strain Manfredo.</title>
        <authorList>
            <person name="Holden M.T.G."/>
            <person name="Scott A."/>
            <person name="Cherevach I."/>
            <person name="Chillingworth T."/>
            <person name="Churcher C."/>
            <person name="Cronin A."/>
            <person name="Dowd L."/>
            <person name="Feltwell T."/>
            <person name="Hamlin N."/>
            <person name="Holroyd S."/>
            <person name="Jagels K."/>
            <person name="Moule S."/>
            <person name="Mungall K."/>
            <person name="Quail M.A."/>
            <person name="Price C."/>
            <person name="Rabbinowitsch E."/>
            <person name="Sharp S."/>
            <person name="Skelton J."/>
            <person name="Whitehead S."/>
            <person name="Barrell B.G."/>
            <person name="Kehoe M."/>
            <person name="Parkhill J."/>
        </authorList>
    </citation>
    <scope>NUCLEOTIDE SEQUENCE [LARGE SCALE GENOMIC DNA]</scope>
    <source>
        <strain>Manfredo</strain>
    </source>
</reference>
<accession>A2RE06</accession>
<feature type="chain" id="PRO_0000302991" description="S-adenosylmethionine synthase">
    <location>
        <begin position="1"/>
        <end position="398"/>
    </location>
</feature>
<feature type="region of interest" description="Flexible loop" evidence="1">
    <location>
        <begin position="100"/>
        <end position="110"/>
    </location>
</feature>
<feature type="binding site" description="in other chain" evidence="1">
    <location>
        <position position="16"/>
    </location>
    <ligand>
        <name>ATP</name>
        <dbReference type="ChEBI" id="CHEBI:30616"/>
        <note>ligand shared between two neighboring subunits</note>
    </ligand>
</feature>
<feature type="binding site" evidence="1">
    <location>
        <position position="18"/>
    </location>
    <ligand>
        <name>Mg(2+)</name>
        <dbReference type="ChEBI" id="CHEBI:18420"/>
    </ligand>
</feature>
<feature type="binding site" evidence="1">
    <location>
        <position position="44"/>
    </location>
    <ligand>
        <name>K(+)</name>
        <dbReference type="ChEBI" id="CHEBI:29103"/>
    </ligand>
</feature>
<feature type="binding site" description="in other chain" evidence="1">
    <location>
        <position position="57"/>
    </location>
    <ligand>
        <name>L-methionine</name>
        <dbReference type="ChEBI" id="CHEBI:57844"/>
        <note>ligand shared between two neighboring subunits</note>
    </ligand>
</feature>
<feature type="binding site" description="in other chain" evidence="1">
    <location>
        <position position="100"/>
    </location>
    <ligand>
        <name>L-methionine</name>
        <dbReference type="ChEBI" id="CHEBI:57844"/>
        <note>ligand shared between two neighboring subunits</note>
    </ligand>
</feature>
<feature type="binding site" description="in other chain" evidence="1">
    <location>
        <begin position="174"/>
        <end position="176"/>
    </location>
    <ligand>
        <name>ATP</name>
        <dbReference type="ChEBI" id="CHEBI:30616"/>
        <note>ligand shared between two neighboring subunits</note>
    </ligand>
</feature>
<feature type="binding site" description="in other chain" evidence="1">
    <location>
        <begin position="241"/>
        <end position="242"/>
    </location>
    <ligand>
        <name>ATP</name>
        <dbReference type="ChEBI" id="CHEBI:30616"/>
        <note>ligand shared between two neighboring subunits</note>
    </ligand>
</feature>
<feature type="binding site" evidence="1">
    <location>
        <position position="250"/>
    </location>
    <ligand>
        <name>ATP</name>
        <dbReference type="ChEBI" id="CHEBI:30616"/>
        <note>ligand shared between two neighboring subunits</note>
    </ligand>
</feature>
<feature type="binding site" evidence="1">
    <location>
        <position position="250"/>
    </location>
    <ligand>
        <name>L-methionine</name>
        <dbReference type="ChEBI" id="CHEBI:57844"/>
        <note>ligand shared between two neighboring subunits</note>
    </ligand>
</feature>
<feature type="binding site" description="in other chain" evidence="1">
    <location>
        <begin position="256"/>
        <end position="257"/>
    </location>
    <ligand>
        <name>ATP</name>
        <dbReference type="ChEBI" id="CHEBI:30616"/>
        <note>ligand shared between two neighboring subunits</note>
    </ligand>
</feature>
<feature type="binding site" evidence="1">
    <location>
        <position position="273"/>
    </location>
    <ligand>
        <name>ATP</name>
        <dbReference type="ChEBI" id="CHEBI:30616"/>
        <note>ligand shared between two neighboring subunits</note>
    </ligand>
</feature>
<feature type="binding site" evidence="1">
    <location>
        <position position="277"/>
    </location>
    <ligand>
        <name>ATP</name>
        <dbReference type="ChEBI" id="CHEBI:30616"/>
        <note>ligand shared between two neighboring subunits</note>
    </ligand>
</feature>
<feature type="binding site" description="in other chain" evidence="1">
    <location>
        <position position="281"/>
    </location>
    <ligand>
        <name>L-methionine</name>
        <dbReference type="ChEBI" id="CHEBI:57844"/>
        <note>ligand shared between two neighboring subunits</note>
    </ligand>
</feature>
<sequence>MSERKLFTSESVSEGHPDKIADQISDAILDAILAEDPEAHVAAETCVYTGSVHVFGEISTTAYIDINRVVRDTIAEIGYTEAEYGFSAESVGVHPSLVEQSGDIAQGVNEALESREGDTDDLSHIGAGDQGLMFGFAINETPELMPLPISLSHQLVRRLAELRKSGEISYLRPDAKSQVTVEYDEHDKPVRVDTVVISTQHDPEATNDQIRQDVIEKVIKAVIPADYLDDDTKFFINPTGRFVIGGPQGDSGLTGRKIIVDTYGGYSRHGGGAFSGKDATKVDRSASYAARYIAKNLVAAGLATKAEVQLAYAIGVAQPVSVRVDTFGTSTVPEAVLEAAVRQVFDLRPAGIIQMLDLKRPIYKQTAAYGHMGRTDIDLPWERLNKVDALVEAVKTVL</sequence>